<accession>Q74Q23</accession>
<accession>Q0WJI0</accession>
<accession>Q8CZP5</accession>
<keyword id="KW-0997">Cell inner membrane</keyword>
<keyword id="KW-1003">Cell membrane</keyword>
<keyword id="KW-0472">Membrane</keyword>
<keyword id="KW-1185">Reference proteome</keyword>
<keyword id="KW-0812">Transmembrane</keyword>
<keyword id="KW-1133">Transmembrane helix</keyword>
<keyword id="KW-0813">Transport</keyword>
<evidence type="ECO:0000255" key="1">
    <source>
        <dbReference type="HAMAP-Rule" id="MF_01191"/>
    </source>
</evidence>
<evidence type="ECO:0000305" key="2"/>
<protein>
    <recommendedName>
        <fullName evidence="1">Probable succinate transporter subunit YjjB</fullName>
    </recommendedName>
</protein>
<gene>
    <name evidence="1" type="primary">yjjB</name>
    <name type="ordered locus">YPO0485</name>
    <name type="ordered locus">y3689</name>
    <name type="ordered locus">YP_3694</name>
</gene>
<name>YJJB_YERPE</name>
<dbReference type="EMBL" id="AL590842">
    <property type="protein sequence ID" value="CAL19165.1"/>
    <property type="status" value="ALT_INIT"/>
    <property type="molecule type" value="Genomic_DNA"/>
</dbReference>
<dbReference type="EMBL" id="AE009952">
    <property type="protein sequence ID" value="AAM87237.1"/>
    <property type="status" value="ALT_INIT"/>
    <property type="molecule type" value="Genomic_DNA"/>
</dbReference>
<dbReference type="EMBL" id="AE017042">
    <property type="protein sequence ID" value="AAS63842.1"/>
    <property type="molecule type" value="Genomic_DNA"/>
</dbReference>
<dbReference type="STRING" id="214092.YPO0485"/>
<dbReference type="PaxDb" id="214092-YPO0485"/>
<dbReference type="EnsemblBacteria" id="AAS63842">
    <property type="protein sequence ID" value="AAS63842"/>
    <property type="gene ID" value="YP_3694"/>
</dbReference>
<dbReference type="KEGG" id="ype:YPO0485"/>
<dbReference type="KEGG" id="ypk:y3689"/>
<dbReference type="KEGG" id="ypm:YP_3694"/>
<dbReference type="eggNOG" id="COG3610">
    <property type="taxonomic scope" value="Bacteria"/>
</dbReference>
<dbReference type="HOGENOM" id="CLU_117642_1_0_6"/>
<dbReference type="OMA" id="AMVEINH"/>
<dbReference type="OrthoDB" id="9810047at2"/>
<dbReference type="Proteomes" id="UP000000815">
    <property type="component" value="Chromosome"/>
</dbReference>
<dbReference type="Proteomes" id="UP000001019">
    <property type="component" value="Chromosome"/>
</dbReference>
<dbReference type="Proteomes" id="UP000002490">
    <property type="component" value="Chromosome"/>
</dbReference>
<dbReference type="GO" id="GO:0005886">
    <property type="term" value="C:plasma membrane"/>
    <property type="evidence" value="ECO:0000318"/>
    <property type="project" value="GO_Central"/>
</dbReference>
<dbReference type="GO" id="GO:0015744">
    <property type="term" value="P:succinate transport"/>
    <property type="evidence" value="ECO:0000318"/>
    <property type="project" value="GO_Central"/>
</dbReference>
<dbReference type="HAMAP" id="MF_01191">
    <property type="entry name" value="YjjB"/>
    <property type="match status" value="1"/>
</dbReference>
<dbReference type="InterPro" id="IPR024528">
    <property type="entry name" value="ThrE_2"/>
</dbReference>
<dbReference type="InterPro" id="IPR050539">
    <property type="entry name" value="ThrE_Dicarb/AminoAcid_Exp"/>
</dbReference>
<dbReference type="InterPro" id="IPR020914">
    <property type="entry name" value="YjjB"/>
</dbReference>
<dbReference type="NCBIfam" id="NF007391">
    <property type="entry name" value="PRK09917.1"/>
    <property type="match status" value="1"/>
</dbReference>
<dbReference type="PANTHER" id="PTHR34390:SF1">
    <property type="entry name" value="SUCCINATE TRANSPORTER SUBUNIT YJJB-RELATED"/>
    <property type="match status" value="1"/>
</dbReference>
<dbReference type="PANTHER" id="PTHR34390">
    <property type="entry name" value="UPF0442 PROTEIN YJJB-RELATED"/>
    <property type="match status" value="1"/>
</dbReference>
<dbReference type="Pfam" id="PF12821">
    <property type="entry name" value="ThrE_2"/>
    <property type="match status" value="1"/>
</dbReference>
<reference key="1">
    <citation type="journal article" date="2001" name="Nature">
        <title>Genome sequence of Yersinia pestis, the causative agent of plague.</title>
        <authorList>
            <person name="Parkhill J."/>
            <person name="Wren B.W."/>
            <person name="Thomson N.R."/>
            <person name="Titball R.W."/>
            <person name="Holden M.T.G."/>
            <person name="Prentice M.B."/>
            <person name="Sebaihia M."/>
            <person name="James K.D."/>
            <person name="Churcher C.M."/>
            <person name="Mungall K.L."/>
            <person name="Baker S."/>
            <person name="Basham D."/>
            <person name="Bentley S.D."/>
            <person name="Brooks K."/>
            <person name="Cerdeno-Tarraga A.-M."/>
            <person name="Chillingworth T."/>
            <person name="Cronin A."/>
            <person name="Davies R.M."/>
            <person name="Davis P."/>
            <person name="Dougan G."/>
            <person name="Feltwell T."/>
            <person name="Hamlin N."/>
            <person name="Holroyd S."/>
            <person name="Jagels K."/>
            <person name="Karlyshev A.V."/>
            <person name="Leather S."/>
            <person name="Moule S."/>
            <person name="Oyston P.C.F."/>
            <person name="Quail M.A."/>
            <person name="Rutherford K.M."/>
            <person name="Simmonds M."/>
            <person name="Skelton J."/>
            <person name="Stevens K."/>
            <person name="Whitehead S."/>
            <person name="Barrell B.G."/>
        </authorList>
    </citation>
    <scope>NUCLEOTIDE SEQUENCE [LARGE SCALE GENOMIC DNA]</scope>
    <source>
        <strain>CO-92 / Biovar Orientalis</strain>
    </source>
</reference>
<reference key="2">
    <citation type="journal article" date="2002" name="J. Bacteriol.">
        <title>Genome sequence of Yersinia pestis KIM.</title>
        <authorList>
            <person name="Deng W."/>
            <person name="Burland V."/>
            <person name="Plunkett G. III"/>
            <person name="Boutin A."/>
            <person name="Mayhew G.F."/>
            <person name="Liss P."/>
            <person name="Perna N.T."/>
            <person name="Rose D.J."/>
            <person name="Mau B."/>
            <person name="Zhou S."/>
            <person name="Schwartz D.C."/>
            <person name="Fetherston J.D."/>
            <person name="Lindler L.E."/>
            <person name="Brubaker R.R."/>
            <person name="Plano G.V."/>
            <person name="Straley S.C."/>
            <person name="McDonough K.A."/>
            <person name="Nilles M.L."/>
            <person name="Matson J.S."/>
            <person name="Blattner F.R."/>
            <person name="Perry R.D."/>
        </authorList>
    </citation>
    <scope>NUCLEOTIDE SEQUENCE [LARGE SCALE GENOMIC DNA]</scope>
    <source>
        <strain>KIM10+ / Biovar Mediaevalis</strain>
    </source>
</reference>
<reference key="3">
    <citation type="journal article" date="2004" name="DNA Res.">
        <title>Complete genome sequence of Yersinia pestis strain 91001, an isolate avirulent to humans.</title>
        <authorList>
            <person name="Song Y."/>
            <person name="Tong Z."/>
            <person name="Wang J."/>
            <person name="Wang L."/>
            <person name="Guo Z."/>
            <person name="Han Y."/>
            <person name="Zhang J."/>
            <person name="Pei D."/>
            <person name="Zhou D."/>
            <person name="Qin H."/>
            <person name="Pang X."/>
            <person name="Han Y."/>
            <person name="Zhai J."/>
            <person name="Li M."/>
            <person name="Cui B."/>
            <person name="Qi Z."/>
            <person name="Jin L."/>
            <person name="Dai R."/>
            <person name="Chen F."/>
            <person name="Li S."/>
            <person name="Ye C."/>
            <person name="Du Z."/>
            <person name="Lin W."/>
            <person name="Wang J."/>
            <person name="Yu J."/>
            <person name="Yang H."/>
            <person name="Wang J."/>
            <person name="Huang P."/>
            <person name="Yang R."/>
        </authorList>
    </citation>
    <scope>NUCLEOTIDE SEQUENCE [LARGE SCALE GENOMIC DNA]</scope>
    <source>
        <strain>91001 / Biovar Mediaevalis</strain>
    </source>
</reference>
<comment type="function">
    <text evidence="1">Involved in succinate export with YjjP. Both proteins are required for export.</text>
</comment>
<comment type="subunit">
    <text evidence="1">The transporter is composed of YjjB and YjjP.</text>
</comment>
<comment type="subcellular location">
    <subcellularLocation>
        <location evidence="1">Cell inner membrane</location>
        <topology evidence="1">Multi-pass membrane protein</topology>
    </subcellularLocation>
</comment>
<comment type="similarity">
    <text evidence="1">Belongs to the ThrE exporter (TC 2.A.79) family.</text>
</comment>
<comment type="sequence caution" evidence="2">
    <conflict type="erroneous initiation">
        <sequence resource="EMBL-CDS" id="AAM87237"/>
    </conflict>
</comment>
<comment type="sequence caution" evidence="2">
    <conflict type="erroneous initiation">
        <sequence resource="EMBL-CDS" id="CAL19165"/>
    </conflict>
</comment>
<feature type="chain" id="PRO_0000293682" description="Probable succinate transporter subunit YjjB">
    <location>
        <begin position="1"/>
        <end position="153"/>
    </location>
</feature>
<feature type="transmembrane region" description="Helical" evidence="1">
    <location>
        <begin position="7"/>
        <end position="27"/>
    </location>
</feature>
<feature type="transmembrane region" description="Helical" evidence="1">
    <location>
        <begin position="51"/>
        <end position="71"/>
    </location>
</feature>
<feature type="transmembrane region" description="Helical" evidence="1">
    <location>
        <begin position="83"/>
        <end position="103"/>
    </location>
</feature>
<feature type="transmembrane region" description="Helical" evidence="1">
    <location>
        <begin position="125"/>
        <end position="145"/>
    </location>
</feature>
<organism>
    <name type="scientific">Yersinia pestis</name>
    <dbReference type="NCBI Taxonomy" id="632"/>
    <lineage>
        <taxon>Bacteria</taxon>
        <taxon>Pseudomonadati</taxon>
        <taxon>Pseudomonadota</taxon>
        <taxon>Gammaproteobacteria</taxon>
        <taxon>Enterobacterales</taxon>
        <taxon>Yersiniaceae</taxon>
        <taxon>Yersinia</taxon>
    </lineage>
</organism>
<sequence length="153" mass="16535">MGVSLLWALLQDMVLAAIPALGFAMVFNVPVRALRYCALLGAIGHGSRMLMIHFGMNIELASLVASIMIGINWSRWLLAHPKVFTVAAVIPMFPGISAYTAMISVVEISHLGYSEALMSTMVTNFLKASFIVGALSIGLSLPGLWLYRKRPGV</sequence>
<proteinExistence type="inferred from homology"/>